<evidence type="ECO:0000255" key="1">
    <source>
        <dbReference type="HAMAP-Rule" id="MF_00607"/>
    </source>
</evidence>
<accession>Q6MUM4</accession>
<proteinExistence type="inferred from homology"/>
<dbReference type="EC" id="2.1.1.182" evidence="1"/>
<dbReference type="EMBL" id="BX293980">
    <property type="protein sequence ID" value="CAE76657.1"/>
    <property type="molecule type" value="Genomic_DNA"/>
</dbReference>
<dbReference type="RefSeq" id="NP_975015.1">
    <property type="nucleotide sequence ID" value="NC_005364.2"/>
</dbReference>
<dbReference type="RefSeq" id="WP_011166215.1">
    <property type="nucleotide sequence ID" value="NC_005364.2"/>
</dbReference>
<dbReference type="SMR" id="Q6MUM4"/>
<dbReference type="STRING" id="272632.MSC_0004"/>
<dbReference type="KEGG" id="mmy:MSC_0004"/>
<dbReference type="PATRIC" id="fig|272632.4.peg.4"/>
<dbReference type="eggNOG" id="COG0030">
    <property type="taxonomic scope" value="Bacteria"/>
</dbReference>
<dbReference type="HOGENOM" id="CLU_041220_0_0_14"/>
<dbReference type="Proteomes" id="UP000001016">
    <property type="component" value="Chromosome"/>
</dbReference>
<dbReference type="GO" id="GO:0005829">
    <property type="term" value="C:cytosol"/>
    <property type="evidence" value="ECO:0007669"/>
    <property type="project" value="TreeGrafter"/>
</dbReference>
<dbReference type="GO" id="GO:0052908">
    <property type="term" value="F:16S rRNA (adenine(1518)-N(6)/adenine(1519)-N(6))-dimethyltransferase activity"/>
    <property type="evidence" value="ECO:0007669"/>
    <property type="project" value="UniProtKB-EC"/>
</dbReference>
<dbReference type="GO" id="GO:0003723">
    <property type="term" value="F:RNA binding"/>
    <property type="evidence" value="ECO:0007669"/>
    <property type="project" value="UniProtKB-KW"/>
</dbReference>
<dbReference type="CDD" id="cd02440">
    <property type="entry name" value="AdoMet_MTases"/>
    <property type="match status" value="1"/>
</dbReference>
<dbReference type="Gene3D" id="1.10.8.100">
    <property type="entry name" value="Ribosomal RNA adenine dimethylase-like, domain 2"/>
    <property type="match status" value="1"/>
</dbReference>
<dbReference type="Gene3D" id="3.40.50.150">
    <property type="entry name" value="Vaccinia Virus protein VP39"/>
    <property type="match status" value="1"/>
</dbReference>
<dbReference type="HAMAP" id="MF_00607">
    <property type="entry name" value="16SrRNA_methyltr_A"/>
    <property type="match status" value="1"/>
</dbReference>
<dbReference type="InterPro" id="IPR001737">
    <property type="entry name" value="KsgA/Erm"/>
</dbReference>
<dbReference type="InterPro" id="IPR023165">
    <property type="entry name" value="rRNA_Ade_diMease-like_C"/>
</dbReference>
<dbReference type="InterPro" id="IPR020596">
    <property type="entry name" value="rRNA_Ade_Mease_Trfase_CS"/>
</dbReference>
<dbReference type="InterPro" id="IPR020598">
    <property type="entry name" value="rRNA_Ade_methylase_Trfase_N"/>
</dbReference>
<dbReference type="InterPro" id="IPR011530">
    <property type="entry name" value="rRNA_adenine_dimethylase"/>
</dbReference>
<dbReference type="InterPro" id="IPR029063">
    <property type="entry name" value="SAM-dependent_MTases_sf"/>
</dbReference>
<dbReference type="NCBIfam" id="TIGR00755">
    <property type="entry name" value="ksgA"/>
    <property type="match status" value="1"/>
</dbReference>
<dbReference type="PANTHER" id="PTHR11727">
    <property type="entry name" value="DIMETHYLADENOSINE TRANSFERASE"/>
    <property type="match status" value="1"/>
</dbReference>
<dbReference type="PANTHER" id="PTHR11727:SF7">
    <property type="entry name" value="DIMETHYLADENOSINE TRANSFERASE-RELATED"/>
    <property type="match status" value="1"/>
</dbReference>
<dbReference type="Pfam" id="PF00398">
    <property type="entry name" value="RrnaAD"/>
    <property type="match status" value="1"/>
</dbReference>
<dbReference type="SMART" id="SM00650">
    <property type="entry name" value="rADc"/>
    <property type="match status" value="1"/>
</dbReference>
<dbReference type="SUPFAM" id="SSF53335">
    <property type="entry name" value="S-adenosyl-L-methionine-dependent methyltransferases"/>
    <property type="match status" value="1"/>
</dbReference>
<dbReference type="PROSITE" id="PS01131">
    <property type="entry name" value="RRNA_A_DIMETH"/>
    <property type="match status" value="1"/>
</dbReference>
<dbReference type="PROSITE" id="PS51689">
    <property type="entry name" value="SAM_RNA_A_N6_MT"/>
    <property type="match status" value="1"/>
</dbReference>
<keyword id="KW-0963">Cytoplasm</keyword>
<keyword id="KW-0489">Methyltransferase</keyword>
<keyword id="KW-1185">Reference proteome</keyword>
<keyword id="KW-0694">RNA-binding</keyword>
<keyword id="KW-0698">rRNA processing</keyword>
<keyword id="KW-0949">S-adenosyl-L-methionine</keyword>
<keyword id="KW-0808">Transferase</keyword>
<gene>
    <name evidence="1" type="primary">rsmA</name>
    <name evidence="1" type="synonym">ksgA</name>
    <name type="ordered locus">MSC_0004</name>
</gene>
<organism>
    <name type="scientific">Mycoplasma mycoides subsp. mycoides SC (strain CCUG 32753 / NCTC 10114 / PG1)</name>
    <dbReference type="NCBI Taxonomy" id="272632"/>
    <lineage>
        <taxon>Bacteria</taxon>
        <taxon>Bacillati</taxon>
        <taxon>Mycoplasmatota</taxon>
        <taxon>Mollicutes</taxon>
        <taxon>Mycoplasmataceae</taxon>
        <taxon>Mycoplasma</taxon>
    </lineage>
</organism>
<sequence length="266" mass="31193">MKAKKYYGQNFISDLNLINRIVDVLDQNKNQLIIEIGPGKGALTKELVKRFDKVVVIEIDQDMVEILKAKFDHSNLEIIQADVLEIDLKQLISKYDYEKISIISNTPYYITSEILFKTLQISDLLTKAVFMLQKEVALRICSNKNENNYNNLSIACQFYSQRNFEFVVNKKMFYPIPKVDSAIISLTFNDIYKKQINDDKKFIEFVRILFNNKRKTILNNLNNIIQNKNKALEYLNTLNISSNLRPEQLDIDEYIKLFNLVYTSNF</sequence>
<name>RSMA_MYCMS</name>
<protein>
    <recommendedName>
        <fullName evidence="1">Ribosomal RNA small subunit methyltransferase A</fullName>
        <ecNumber evidence="1">2.1.1.182</ecNumber>
    </recommendedName>
    <alternativeName>
        <fullName evidence="1">16S rRNA (adenine(1518)-N(6)/adenine(1519)-N(6))-dimethyltransferase</fullName>
    </alternativeName>
    <alternativeName>
        <fullName evidence="1">16S rRNA dimethyladenosine transferase</fullName>
    </alternativeName>
    <alternativeName>
        <fullName evidence="1">16S rRNA dimethylase</fullName>
    </alternativeName>
    <alternativeName>
        <fullName evidence="1">S-adenosylmethionine-6-N', N'-adenosyl(rRNA) dimethyltransferase</fullName>
    </alternativeName>
</protein>
<reference key="1">
    <citation type="journal article" date="2004" name="Genome Res.">
        <title>The genome sequence of Mycoplasma mycoides subsp. mycoides SC type strain PG1T, the causative agent of contagious bovine pleuropneumonia (CBPP).</title>
        <authorList>
            <person name="Westberg J."/>
            <person name="Persson A."/>
            <person name="Holmberg A."/>
            <person name="Goesmann A."/>
            <person name="Lundeberg J."/>
            <person name="Johansson K.-E."/>
            <person name="Pettersson B."/>
            <person name="Uhlen M."/>
        </authorList>
    </citation>
    <scope>NUCLEOTIDE SEQUENCE [LARGE SCALE GENOMIC DNA]</scope>
    <source>
        <strain>CCUG 32753 / NCTC 10114 / PG1</strain>
    </source>
</reference>
<feature type="chain" id="PRO_0000101562" description="Ribosomal RNA small subunit methyltransferase A">
    <location>
        <begin position="1"/>
        <end position="266"/>
    </location>
</feature>
<feature type="binding site" evidence="1">
    <location>
        <position position="10"/>
    </location>
    <ligand>
        <name>S-adenosyl-L-methionine</name>
        <dbReference type="ChEBI" id="CHEBI:59789"/>
    </ligand>
</feature>
<feature type="binding site" evidence="1">
    <location>
        <position position="12"/>
    </location>
    <ligand>
        <name>S-adenosyl-L-methionine</name>
        <dbReference type="ChEBI" id="CHEBI:59789"/>
    </ligand>
</feature>
<feature type="binding site" evidence="1">
    <location>
        <position position="37"/>
    </location>
    <ligand>
        <name>S-adenosyl-L-methionine</name>
        <dbReference type="ChEBI" id="CHEBI:59789"/>
    </ligand>
</feature>
<feature type="binding site" evidence="1">
    <location>
        <position position="58"/>
    </location>
    <ligand>
        <name>S-adenosyl-L-methionine</name>
        <dbReference type="ChEBI" id="CHEBI:59789"/>
    </ligand>
</feature>
<feature type="binding site" evidence="1">
    <location>
        <position position="82"/>
    </location>
    <ligand>
        <name>S-adenosyl-L-methionine</name>
        <dbReference type="ChEBI" id="CHEBI:59789"/>
    </ligand>
</feature>
<feature type="binding site" evidence="1">
    <location>
        <position position="105"/>
    </location>
    <ligand>
        <name>S-adenosyl-L-methionine</name>
        <dbReference type="ChEBI" id="CHEBI:59789"/>
    </ligand>
</feature>
<comment type="function">
    <text evidence="1">Specifically dimethylates two adjacent adenosines (A1518 and A1519) in the loop of a conserved hairpin near the 3'-end of 16S rRNA in the 30S particle. May play a critical role in biogenesis of 30S subunits.</text>
</comment>
<comment type="catalytic activity">
    <reaction evidence="1">
        <text>adenosine(1518)/adenosine(1519) in 16S rRNA + 4 S-adenosyl-L-methionine = N(6)-dimethyladenosine(1518)/N(6)-dimethyladenosine(1519) in 16S rRNA + 4 S-adenosyl-L-homocysteine + 4 H(+)</text>
        <dbReference type="Rhea" id="RHEA:19609"/>
        <dbReference type="Rhea" id="RHEA-COMP:10232"/>
        <dbReference type="Rhea" id="RHEA-COMP:10233"/>
        <dbReference type="ChEBI" id="CHEBI:15378"/>
        <dbReference type="ChEBI" id="CHEBI:57856"/>
        <dbReference type="ChEBI" id="CHEBI:59789"/>
        <dbReference type="ChEBI" id="CHEBI:74411"/>
        <dbReference type="ChEBI" id="CHEBI:74493"/>
        <dbReference type="EC" id="2.1.1.182"/>
    </reaction>
</comment>
<comment type="subcellular location">
    <subcellularLocation>
        <location evidence="1">Cytoplasm</location>
    </subcellularLocation>
</comment>
<comment type="similarity">
    <text evidence="1">Belongs to the class I-like SAM-binding methyltransferase superfamily. rRNA adenine N(6)-methyltransferase family. RsmA subfamily.</text>
</comment>